<proteinExistence type="inferred from homology"/>
<evidence type="ECO:0000255" key="1">
    <source>
        <dbReference type="HAMAP-Rule" id="MF_00454"/>
    </source>
</evidence>
<feature type="chain" id="PRO_1000072380" description="Fluoride-specific ion channel FluC">
    <location>
        <begin position="1"/>
        <end position="126"/>
    </location>
</feature>
<feature type="transmembrane region" description="Helical" evidence="1">
    <location>
        <begin position="3"/>
        <end position="23"/>
    </location>
</feature>
<feature type="transmembrane region" description="Helical" evidence="1">
    <location>
        <begin position="37"/>
        <end position="57"/>
    </location>
</feature>
<feature type="transmembrane region" description="Helical" evidence="1">
    <location>
        <begin position="70"/>
        <end position="90"/>
    </location>
</feature>
<feature type="transmembrane region" description="Helical" evidence="1">
    <location>
        <begin position="104"/>
        <end position="124"/>
    </location>
</feature>
<feature type="binding site" evidence="1">
    <location>
        <position position="77"/>
    </location>
    <ligand>
        <name>Na(+)</name>
        <dbReference type="ChEBI" id="CHEBI:29101"/>
        <note>structural</note>
    </ligand>
</feature>
<feature type="binding site" evidence="1">
    <location>
        <position position="80"/>
    </location>
    <ligand>
        <name>Na(+)</name>
        <dbReference type="ChEBI" id="CHEBI:29101"/>
        <note>structural</note>
    </ligand>
</feature>
<dbReference type="EMBL" id="CP000627">
    <property type="protein sequence ID" value="ABQ20911.1"/>
    <property type="molecule type" value="Genomic_DNA"/>
</dbReference>
<dbReference type="EMBL" id="CP001235">
    <property type="protein sequence ID" value="ACP08148.1"/>
    <property type="molecule type" value="Genomic_DNA"/>
</dbReference>
<dbReference type="RefSeq" id="WP_000006444.1">
    <property type="nucleotide sequence ID" value="NZ_JAACZH010000014.1"/>
</dbReference>
<dbReference type="SMR" id="A5F4D3"/>
<dbReference type="KEGG" id="vco:VC0395_A2453"/>
<dbReference type="KEGG" id="vcr:VC395_0120"/>
<dbReference type="PATRIC" id="fig|345073.21.peg.111"/>
<dbReference type="eggNOG" id="COG0239">
    <property type="taxonomic scope" value="Bacteria"/>
</dbReference>
<dbReference type="HOGENOM" id="CLU_114342_3_0_6"/>
<dbReference type="OrthoDB" id="9806299at2"/>
<dbReference type="Proteomes" id="UP000000249">
    <property type="component" value="Chromosome 2"/>
</dbReference>
<dbReference type="GO" id="GO:0005886">
    <property type="term" value="C:plasma membrane"/>
    <property type="evidence" value="ECO:0007669"/>
    <property type="project" value="UniProtKB-SubCell"/>
</dbReference>
<dbReference type="GO" id="GO:0062054">
    <property type="term" value="F:fluoride channel activity"/>
    <property type="evidence" value="ECO:0007669"/>
    <property type="project" value="UniProtKB-UniRule"/>
</dbReference>
<dbReference type="GO" id="GO:0046872">
    <property type="term" value="F:metal ion binding"/>
    <property type="evidence" value="ECO:0007669"/>
    <property type="project" value="UniProtKB-KW"/>
</dbReference>
<dbReference type="GO" id="GO:0140114">
    <property type="term" value="P:cellular detoxification of fluoride"/>
    <property type="evidence" value="ECO:0007669"/>
    <property type="project" value="UniProtKB-UniRule"/>
</dbReference>
<dbReference type="HAMAP" id="MF_00454">
    <property type="entry name" value="FluC"/>
    <property type="match status" value="1"/>
</dbReference>
<dbReference type="InterPro" id="IPR003691">
    <property type="entry name" value="FluC"/>
</dbReference>
<dbReference type="NCBIfam" id="TIGR00494">
    <property type="entry name" value="crcB"/>
    <property type="match status" value="1"/>
</dbReference>
<dbReference type="NCBIfam" id="NF010796">
    <property type="entry name" value="PRK14200.1"/>
    <property type="match status" value="1"/>
</dbReference>
<dbReference type="PANTHER" id="PTHR28259">
    <property type="entry name" value="FLUORIDE EXPORT PROTEIN 1-RELATED"/>
    <property type="match status" value="1"/>
</dbReference>
<dbReference type="PANTHER" id="PTHR28259:SF1">
    <property type="entry name" value="FLUORIDE EXPORT PROTEIN 1-RELATED"/>
    <property type="match status" value="1"/>
</dbReference>
<dbReference type="Pfam" id="PF02537">
    <property type="entry name" value="CRCB"/>
    <property type="match status" value="1"/>
</dbReference>
<comment type="function">
    <text evidence="1">Fluoride-specific ion channel. Important for reducing fluoride concentration in the cell, thus reducing its toxicity.</text>
</comment>
<comment type="catalytic activity">
    <reaction evidence="1">
        <text>fluoride(in) = fluoride(out)</text>
        <dbReference type="Rhea" id="RHEA:76159"/>
        <dbReference type="ChEBI" id="CHEBI:17051"/>
    </reaction>
    <physiologicalReaction direction="left-to-right" evidence="1">
        <dbReference type="Rhea" id="RHEA:76160"/>
    </physiologicalReaction>
</comment>
<comment type="activity regulation">
    <text evidence="1">Na(+) is not transported, but it plays an essential structural role and its presence is essential for fluoride channel function.</text>
</comment>
<comment type="subcellular location">
    <subcellularLocation>
        <location evidence="1">Cell inner membrane</location>
        <topology evidence="1">Multi-pass membrane protein</topology>
    </subcellularLocation>
</comment>
<comment type="similarity">
    <text evidence="1">Belongs to the fluoride channel Fluc/FEX (TC 1.A.43) family.</text>
</comment>
<organism>
    <name type="scientific">Vibrio cholerae serotype O1 (strain ATCC 39541 / Classical Ogawa 395 / O395)</name>
    <dbReference type="NCBI Taxonomy" id="345073"/>
    <lineage>
        <taxon>Bacteria</taxon>
        <taxon>Pseudomonadati</taxon>
        <taxon>Pseudomonadota</taxon>
        <taxon>Gammaproteobacteria</taxon>
        <taxon>Vibrionales</taxon>
        <taxon>Vibrionaceae</taxon>
        <taxon>Vibrio</taxon>
    </lineage>
</organism>
<accession>A5F4D3</accession>
<accession>C3M2I4</accession>
<reference key="1">
    <citation type="submission" date="2007-03" db="EMBL/GenBank/DDBJ databases">
        <authorList>
            <person name="Heidelberg J."/>
        </authorList>
    </citation>
    <scope>NUCLEOTIDE SEQUENCE [LARGE SCALE GENOMIC DNA]</scope>
    <source>
        <strain>ATCC 39541 / Classical Ogawa 395 / O395</strain>
    </source>
</reference>
<reference key="2">
    <citation type="journal article" date="2008" name="PLoS ONE">
        <title>A recalibrated molecular clock and independent origins for the cholera pandemic clones.</title>
        <authorList>
            <person name="Feng L."/>
            <person name="Reeves P.R."/>
            <person name="Lan R."/>
            <person name="Ren Y."/>
            <person name="Gao C."/>
            <person name="Zhou Z."/>
            <person name="Ren Y."/>
            <person name="Cheng J."/>
            <person name="Wang W."/>
            <person name="Wang J."/>
            <person name="Qian W."/>
            <person name="Li D."/>
            <person name="Wang L."/>
        </authorList>
    </citation>
    <scope>NUCLEOTIDE SEQUENCE [LARGE SCALE GENOMIC DNA]</scope>
    <source>
        <strain>ATCC 39541 / Classical Ogawa 395 / O395</strain>
    </source>
</reference>
<gene>
    <name evidence="1" type="primary">fluC</name>
    <name evidence="1" type="synonym">crcB</name>
    <name type="ordered locus">VC0395_A2453</name>
    <name type="ordered locus">VC395_0120</name>
</gene>
<sequence length="126" mass="13531">MSFAILGFIALGGAVGACARFLVSEICVTLFGRGFPIGTLTVNVVGSFIMGVLIACVENEWLSPYPWKQVIGLGFLGALTTFSTFSMDNVLLMQQGAFFKMGANVLLNVILSISAAWIGFHWLMKS</sequence>
<keyword id="KW-0997">Cell inner membrane</keyword>
<keyword id="KW-1003">Cell membrane</keyword>
<keyword id="KW-0407">Ion channel</keyword>
<keyword id="KW-0406">Ion transport</keyword>
<keyword id="KW-0472">Membrane</keyword>
<keyword id="KW-0479">Metal-binding</keyword>
<keyword id="KW-0915">Sodium</keyword>
<keyword id="KW-0812">Transmembrane</keyword>
<keyword id="KW-1133">Transmembrane helix</keyword>
<keyword id="KW-0813">Transport</keyword>
<protein>
    <recommendedName>
        <fullName evidence="1">Fluoride-specific ion channel FluC</fullName>
    </recommendedName>
</protein>
<name>FLUC_VIBC3</name>